<gene>
    <name evidence="1" type="primary">deoA</name>
    <name type="ordered locus">SbBS512_E4929</name>
</gene>
<dbReference type="EC" id="2.4.2.4" evidence="1"/>
<dbReference type="EMBL" id="CP001063">
    <property type="protein sequence ID" value="ACD10053.1"/>
    <property type="molecule type" value="Genomic_DNA"/>
</dbReference>
<dbReference type="RefSeq" id="WP_000477811.1">
    <property type="nucleotide sequence ID" value="NC_010658.1"/>
</dbReference>
<dbReference type="SMR" id="B2TZR5"/>
<dbReference type="STRING" id="344609.SbBS512_E4929"/>
<dbReference type="GeneID" id="93777462"/>
<dbReference type="KEGG" id="sbc:SbBS512_E4929"/>
<dbReference type="HOGENOM" id="CLU_025040_0_1_6"/>
<dbReference type="UniPathway" id="UPA00578">
    <property type="reaction ID" value="UER00638"/>
</dbReference>
<dbReference type="Proteomes" id="UP000001030">
    <property type="component" value="Chromosome"/>
</dbReference>
<dbReference type="GO" id="GO:0005829">
    <property type="term" value="C:cytosol"/>
    <property type="evidence" value="ECO:0007669"/>
    <property type="project" value="TreeGrafter"/>
</dbReference>
<dbReference type="GO" id="GO:0004645">
    <property type="term" value="F:1,4-alpha-oligoglucan phosphorylase activity"/>
    <property type="evidence" value="ECO:0007669"/>
    <property type="project" value="InterPro"/>
</dbReference>
<dbReference type="GO" id="GO:0009032">
    <property type="term" value="F:thymidine phosphorylase activity"/>
    <property type="evidence" value="ECO:0007669"/>
    <property type="project" value="UniProtKB-UniRule"/>
</dbReference>
<dbReference type="GO" id="GO:0006206">
    <property type="term" value="P:pyrimidine nucleobase metabolic process"/>
    <property type="evidence" value="ECO:0007669"/>
    <property type="project" value="InterPro"/>
</dbReference>
<dbReference type="GO" id="GO:0046104">
    <property type="term" value="P:thymidine metabolic process"/>
    <property type="evidence" value="ECO:0007669"/>
    <property type="project" value="UniProtKB-UniRule"/>
</dbReference>
<dbReference type="FunFam" id="3.40.1030.10:FF:000001">
    <property type="entry name" value="Thymidine phosphorylase"/>
    <property type="match status" value="1"/>
</dbReference>
<dbReference type="FunFam" id="3.90.1170.30:FF:000001">
    <property type="entry name" value="Thymidine phosphorylase"/>
    <property type="match status" value="1"/>
</dbReference>
<dbReference type="Gene3D" id="3.40.1030.10">
    <property type="entry name" value="Nucleoside phosphorylase/phosphoribosyltransferase catalytic domain"/>
    <property type="match status" value="1"/>
</dbReference>
<dbReference type="Gene3D" id="3.90.1170.30">
    <property type="entry name" value="Pyrimidine nucleoside phosphorylase-like, C-terminal domain"/>
    <property type="match status" value="1"/>
</dbReference>
<dbReference type="Gene3D" id="1.20.970.10">
    <property type="entry name" value="Transferase, Pyrimidine Nucleoside Phosphorylase, Chain C"/>
    <property type="match status" value="1"/>
</dbReference>
<dbReference type="HAMAP" id="MF_01628">
    <property type="entry name" value="Thymid_phosp"/>
    <property type="match status" value="1"/>
</dbReference>
<dbReference type="InterPro" id="IPR000312">
    <property type="entry name" value="Glycosyl_Trfase_fam3"/>
</dbReference>
<dbReference type="InterPro" id="IPR017459">
    <property type="entry name" value="Glycosyl_Trfase_fam3_N_dom"/>
</dbReference>
<dbReference type="InterPro" id="IPR036320">
    <property type="entry name" value="Glycosyl_Trfase_fam3_N_dom_sf"/>
</dbReference>
<dbReference type="InterPro" id="IPR035902">
    <property type="entry name" value="Nuc_phospho_transferase"/>
</dbReference>
<dbReference type="InterPro" id="IPR036566">
    <property type="entry name" value="PYNP-like_C_sf"/>
</dbReference>
<dbReference type="InterPro" id="IPR013102">
    <property type="entry name" value="PYNP_C"/>
</dbReference>
<dbReference type="InterPro" id="IPR018090">
    <property type="entry name" value="Pyrmidine_PPas_bac/euk"/>
</dbReference>
<dbReference type="InterPro" id="IPR017872">
    <property type="entry name" value="Pyrmidine_PPase_CS"/>
</dbReference>
<dbReference type="InterPro" id="IPR000053">
    <property type="entry name" value="Thymidine/pyrmidine_PPase"/>
</dbReference>
<dbReference type="InterPro" id="IPR013465">
    <property type="entry name" value="Thymidine_Pase"/>
</dbReference>
<dbReference type="NCBIfam" id="NF004490">
    <property type="entry name" value="PRK05820.1"/>
    <property type="match status" value="1"/>
</dbReference>
<dbReference type="NCBIfam" id="TIGR02643">
    <property type="entry name" value="T_phosphoryl"/>
    <property type="match status" value="1"/>
</dbReference>
<dbReference type="NCBIfam" id="TIGR02644">
    <property type="entry name" value="Y_phosphoryl"/>
    <property type="match status" value="1"/>
</dbReference>
<dbReference type="PANTHER" id="PTHR10515">
    <property type="entry name" value="THYMIDINE PHOSPHORYLASE"/>
    <property type="match status" value="1"/>
</dbReference>
<dbReference type="PANTHER" id="PTHR10515:SF0">
    <property type="entry name" value="THYMIDINE PHOSPHORYLASE"/>
    <property type="match status" value="1"/>
</dbReference>
<dbReference type="Pfam" id="PF02885">
    <property type="entry name" value="Glycos_trans_3N"/>
    <property type="match status" value="1"/>
</dbReference>
<dbReference type="Pfam" id="PF00591">
    <property type="entry name" value="Glycos_transf_3"/>
    <property type="match status" value="1"/>
</dbReference>
<dbReference type="Pfam" id="PF07831">
    <property type="entry name" value="PYNP_C"/>
    <property type="match status" value="1"/>
</dbReference>
<dbReference type="PIRSF" id="PIRSF000478">
    <property type="entry name" value="TP_PyNP"/>
    <property type="match status" value="1"/>
</dbReference>
<dbReference type="SMART" id="SM00941">
    <property type="entry name" value="PYNP_C"/>
    <property type="match status" value="1"/>
</dbReference>
<dbReference type="SUPFAM" id="SSF52418">
    <property type="entry name" value="Nucleoside phosphorylase/phosphoribosyltransferase catalytic domain"/>
    <property type="match status" value="1"/>
</dbReference>
<dbReference type="SUPFAM" id="SSF47648">
    <property type="entry name" value="Nucleoside phosphorylase/phosphoribosyltransferase N-terminal domain"/>
    <property type="match status" value="1"/>
</dbReference>
<dbReference type="SUPFAM" id="SSF54680">
    <property type="entry name" value="Pyrimidine nucleoside phosphorylase C-terminal domain"/>
    <property type="match status" value="1"/>
</dbReference>
<dbReference type="PROSITE" id="PS00647">
    <property type="entry name" value="THYMID_PHOSPHORYLASE"/>
    <property type="match status" value="1"/>
</dbReference>
<feature type="chain" id="PRO_1000186276" description="Thymidine phosphorylase">
    <location>
        <begin position="1"/>
        <end position="440"/>
    </location>
</feature>
<comment type="function">
    <text evidence="1">The enzymes which catalyze the reversible phosphorolysis of pyrimidine nucleosides are involved in the degradation of these compounds and in their utilization as carbon and energy sources, or in the rescue of pyrimidine bases for nucleotide synthesis.</text>
</comment>
<comment type="catalytic activity">
    <reaction evidence="1">
        <text>thymidine + phosphate = 2-deoxy-alpha-D-ribose 1-phosphate + thymine</text>
        <dbReference type="Rhea" id="RHEA:16037"/>
        <dbReference type="ChEBI" id="CHEBI:17748"/>
        <dbReference type="ChEBI" id="CHEBI:17821"/>
        <dbReference type="ChEBI" id="CHEBI:43474"/>
        <dbReference type="ChEBI" id="CHEBI:57259"/>
        <dbReference type="EC" id="2.4.2.4"/>
    </reaction>
</comment>
<comment type="pathway">
    <text evidence="1">Pyrimidine metabolism; dTMP biosynthesis via salvage pathway; dTMP from thymine: step 1/2.</text>
</comment>
<comment type="subunit">
    <text evidence="1">Homodimer.</text>
</comment>
<comment type="similarity">
    <text evidence="1">Belongs to the thymidine/pyrimidine-nucleoside phosphorylase family.</text>
</comment>
<keyword id="KW-0328">Glycosyltransferase</keyword>
<keyword id="KW-1185">Reference proteome</keyword>
<keyword id="KW-0808">Transferase</keyword>
<protein>
    <recommendedName>
        <fullName evidence="1">Thymidine phosphorylase</fullName>
        <ecNumber evidence="1">2.4.2.4</ecNumber>
    </recommendedName>
    <alternativeName>
        <fullName evidence="1">TdRPase</fullName>
    </alternativeName>
</protein>
<accession>B2TZR5</accession>
<evidence type="ECO:0000255" key="1">
    <source>
        <dbReference type="HAMAP-Rule" id="MF_01628"/>
    </source>
</evidence>
<reference key="1">
    <citation type="submission" date="2008-05" db="EMBL/GenBank/DDBJ databases">
        <title>Complete sequence of Shigella boydii serotype 18 strain BS512.</title>
        <authorList>
            <person name="Rasko D.A."/>
            <person name="Rosovitz M."/>
            <person name="Maurelli A.T."/>
            <person name="Myers G."/>
            <person name="Seshadri R."/>
            <person name="Cer R."/>
            <person name="Jiang L."/>
            <person name="Ravel J."/>
            <person name="Sebastian Y."/>
        </authorList>
    </citation>
    <scope>NUCLEOTIDE SEQUENCE [LARGE SCALE GENOMIC DNA]</scope>
    <source>
        <strain>CDC 3083-94 / BS512</strain>
    </source>
</reference>
<organism>
    <name type="scientific">Shigella boydii serotype 18 (strain CDC 3083-94 / BS512)</name>
    <dbReference type="NCBI Taxonomy" id="344609"/>
    <lineage>
        <taxon>Bacteria</taxon>
        <taxon>Pseudomonadati</taxon>
        <taxon>Pseudomonadota</taxon>
        <taxon>Gammaproteobacteria</taxon>
        <taxon>Enterobacterales</taxon>
        <taxon>Enterobacteriaceae</taxon>
        <taxon>Shigella</taxon>
    </lineage>
</organism>
<name>TYPH_SHIB3</name>
<sequence length="440" mass="47180">MFLAQEIIRKKRDGHALSDEEIRFFINGIRDNTISEGQIAALAMTIFFHDMTMPERVSLTMAMRDSGTVLDWKSLHLNGPIVDKHSTGGVGDVTSLMLGPMVAACGGYIPMISGRGLGHTGGTLDKLESIPGFDIFPDDNRFREIIKDVGVAIIGQTSSLAPADKRFYATRDITATVDSIPLITASILAKKLAEGLDALVMDVKVGSGAFMPTYELSEALAEAIVGVANGAGVRTTALLTDMNQVLASSAGNAVEVREAVQFLTGEYRNPRLFDVTMALCVEMLISGKLAKDDAEARAKLQAVLDNGKAAEVFGRMVAAQKGPTDFVENYAKYLPTAMLTKAVYADTEGFVSEMDTRALGMAVVAMGGGRRQASDTIDYSVGFTDMARLGDQVDGQRPLAVIHAKDENSWQEAAKAVKAAIKLADKAPESTPTVYRRISE</sequence>
<proteinExistence type="inferred from homology"/>